<proteinExistence type="inferred from homology"/>
<dbReference type="EMBL" id="CP000350">
    <property type="protein sequence ID" value="ABJ77359.1"/>
    <property type="molecule type" value="Genomic_DNA"/>
</dbReference>
<dbReference type="RefSeq" id="WP_011669197.1">
    <property type="nucleotide sequence ID" value="NC_008510.1"/>
</dbReference>
<dbReference type="SMR" id="Q04P11"/>
<dbReference type="GeneID" id="61175414"/>
<dbReference type="KEGG" id="lbj:LBJ_2964"/>
<dbReference type="HOGENOM" id="CLU_164837_0_0_12"/>
<dbReference type="Proteomes" id="UP000000656">
    <property type="component" value="Chromosome 1"/>
</dbReference>
<dbReference type="GO" id="GO:0005829">
    <property type="term" value="C:cytosol"/>
    <property type="evidence" value="ECO:0007669"/>
    <property type="project" value="TreeGrafter"/>
</dbReference>
<dbReference type="GO" id="GO:0048027">
    <property type="term" value="F:mRNA 5'-UTR binding"/>
    <property type="evidence" value="ECO:0007669"/>
    <property type="project" value="UniProtKB-UniRule"/>
</dbReference>
<dbReference type="GO" id="GO:0044781">
    <property type="term" value="P:bacterial-type flagellum organization"/>
    <property type="evidence" value="ECO:0007669"/>
    <property type="project" value="UniProtKB-KW"/>
</dbReference>
<dbReference type="GO" id="GO:0006402">
    <property type="term" value="P:mRNA catabolic process"/>
    <property type="evidence" value="ECO:0007669"/>
    <property type="project" value="InterPro"/>
</dbReference>
<dbReference type="GO" id="GO:0045947">
    <property type="term" value="P:negative regulation of translational initiation"/>
    <property type="evidence" value="ECO:0007669"/>
    <property type="project" value="UniProtKB-UniRule"/>
</dbReference>
<dbReference type="GO" id="GO:1902208">
    <property type="term" value="P:regulation of bacterial-type flagellum assembly"/>
    <property type="evidence" value="ECO:0007669"/>
    <property type="project" value="UniProtKB-UniRule"/>
</dbReference>
<dbReference type="GO" id="GO:0006109">
    <property type="term" value="P:regulation of carbohydrate metabolic process"/>
    <property type="evidence" value="ECO:0007669"/>
    <property type="project" value="InterPro"/>
</dbReference>
<dbReference type="FunFam" id="2.60.40.4380:FF:000002">
    <property type="entry name" value="Translational regulator CsrA"/>
    <property type="match status" value="1"/>
</dbReference>
<dbReference type="Gene3D" id="2.60.40.4380">
    <property type="entry name" value="Translational regulator CsrA"/>
    <property type="match status" value="1"/>
</dbReference>
<dbReference type="HAMAP" id="MF_00167">
    <property type="entry name" value="CsrA"/>
    <property type="match status" value="1"/>
</dbReference>
<dbReference type="InterPro" id="IPR003751">
    <property type="entry name" value="CsrA"/>
</dbReference>
<dbReference type="InterPro" id="IPR036107">
    <property type="entry name" value="CsrA_sf"/>
</dbReference>
<dbReference type="NCBIfam" id="TIGR00202">
    <property type="entry name" value="csrA"/>
    <property type="match status" value="1"/>
</dbReference>
<dbReference type="NCBIfam" id="NF002469">
    <property type="entry name" value="PRK01712.1"/>
    <property type="match status" value="1"/>
</dbReference>
<dbReference type="PANTHER" id="PTHR34984">
    <property type="entry name" value="CARBON STORAGE REGULATOR"/>
    <property type="match status" value="1"/>
</dbReference>
<dbReference type="PANTHER" id="PTHR34984:SF1">
    <property type="entry name" value="CARBON STORAGE REGULATOR"/>
    <property type="match status" value="1"/>
</dbReference>
<dbReference type="Pfam" id="PF02599">
    <property type="entry name" value="CsrA"/>
    <property type="match status" value="1"/>
</dbReference>
<dbReference type="SUPFAM" id="SSF117130">
    <property type="entry name" value="CsrA-like"/>
    <property type="match status" value="1"/>
</dbReference>
<comment type="function">
    <text evidence="1">A translational regulator that binds mRNA to regulate translation initiation and/or mRNA stability. Usually binds in the 5'-UTR at or near the Shine-Dalgarno sequence preventing ribosome-binding, thus repressing translation. Its main target seems to be the major flagellin gene, while its function is anatagonized by FliW.</text>
</comment>
<comment type="subunit">
    <text evidence="1">Homodimer; the beta-strands of each monomer intercalate to form a hydrophobic core, while the alpha-helices form wings that extend away from the core.</text>
</comment>
<comment type="subcellular location">
    <subcellularLocation>
        <location evidence="1">Cytoplasm</location>
    </subcellularLocation>
</comment>
<comment type="similarity">
    <text evidence="1">Belongs to the CsrA/RsmA family.</text>
</comment>
<keyword id="KW-1005">Bacterial flagellum biogenesis</keyword>
<keyword id="KW-0963">Cytoplasm</keyword>
<keyword id="KW-0678">Repressor</keyword>
<keyword id="KW-0694">RNA-binding</keyword>
<keyword id="KW-0810">Translation regulation</keyword>
<organism>
    <name type="scientific">Leptospira borgpetersenii serovar Hardjo-bovis (strain JB197)</name>
    <dbReference type="NCBI Taxonomy" id="355277"/>
    <lineage>
        <taxon>Bacteria</taxon>
        <taxon>Pseudomonadati</taxon>
        <taxon>Spirochaetota</taxon>
        <taxon>Spirochaetia</taxon>
        <taxon>Leptospirales</taxon>
        <taxon>Leptospiraceae</taxon>
        <taxon>Leptospira</taxon>
    </lineage>
</organism>
<feature type="chain" id="PRO_1000023396" description="Translational regulator CsrA">
    <location>
        <begin position="1"/>
        <end position="84"/>
    </location>
</feature>
<reference key="1">
    <citation type="journal article" date="2006" name="Proc. Natl. Acad. Sci. U.S.A.">
        <title>Genome reduction in Leptospira borgpetersenii reflects limited transmission potential.</title>
        <authorList>
            <person name="Bulach D.M."/>
            <person name="Zuerner R.L."/>
            <person name="Wilson P."/>
            <person name="Seemann T."/>
            <person name="McGrath A."/>
            <person name="Cullen P.A."/>
            <person name="Davis J."/>
            <person name="Johnson M."/>
            <person name="Kuczek E."/>
            <person name="Alt D.P."/>
            <person name="Peterson-Burch B."/>
            <person name="Coppel R.L."/>
            <person name="Rood J.I."/>
            <person name="Davies J.K."/>
            <person name="Adler B."/>
        </authorList>
    </citation>
    <scope>NUCLEOTIDE SEQUENCE [LARGE SCALE GENOMIC DNA]</scope>
    <source>
        <strain>JB197</strain>
    </source>
</reference>
<sequence length="84" mass="9354">MLVLARRTNESIMIGDDIEIVIVDIKGDQVKIGVKAPRNVSVHRAEVYKDIQEENRKAAETKIKPEDLGKIGDILKKKDSGKKG</sequence>
<evidence type="ECO:0000255" key="1">
    <source>
        <dbReference type="HAMAP-Rule" id="MF_00167"/>
    </source>
</evidence>
<accession>Q04P11</accession>
<gene>
    <name evidence="1" type="primary">csrA</name>
    <name type="ordered locus">LBJ_2964</name>
</gene>
<name>CSRA_LEPBJ</name>
<protein>
    <recommendedName>
        <fullName evidence="1">Translational regulator CsrA</fullName>
    </recommendedName>
</protein>